<name>PEX29_OGAPD</name>
<organism>
    <name type="scientific">Ogataea parapolymorpha (strain ATCC 26012 / BCRC 20466 / JCM 22074 / NRRL Y-7560 / DL-1)</name>
    <name type="common">Yeast</name>
    <name type="synonym">Hansenula polymorpha</name>
    <dbReference type="NCBI Taxonomy" id="871575"/>
    <lineage>
        <taxon>Eukaryota</taxon>
        <taxon>Fungi</taxon>
        <taxon>Dikarya</taxon>
        <taxon>Ascomycota</taxon>
        <taxon>Saccharomycotina</taxon>
        <taxon>Pichiomycetes</taxon>
        <taxon>Pichiales</taxon>
        <taxon>Pichiaceae</taxon>
        <taxon>Ogataea</taxon>
    </lineage>
</organism>
<dbReference type="EMBL" id="AEOI02000001">
    <property type="protein sequence ID" value="ESX03585.1"/>
    <property type="molecule type" value="Genomic_DNA"/>
</dbReference>
<dbReference type="RefSeq" id="XP_013937001.1">
    <property type="nucleotide sequence ID" value="XM_014081526.1"/>
</dbReference>
<dbReference type="STRING" id="871575.W1QL91"/>
<dbReference type="GeneID" id="25769555"/>
<dbReference type="KEGG" id="opa:HPODL_00080"/>
<dbReference type="eggNOG" id="ENOG502QQTF">
    <property type="taxonomic scope" value="Eukaryota"/>
</dbReference>
<dbReference type="HOGENOM" id="CLU_023118_0_0_1"/>
<dbReference type="OMA" id="QNCMDDF"/>
<dbReference type="OrthoDB" id="74314at2759"/>
<dbReference type="Proteomes" id="UP000008673">
    <property type="component" value="Chromosome I"/>
</dbReference>
<dbReference type="GO" id="GO:0005789">
    <property type="term" value="C:endoplasmic reticulum membrane"/>
    <property type="evidence" value="ECO:0007669"/>
    <property type="project" value="UniProtKB-SubCell"/>
</dbReference>
<dbReference type="GO" id="GO:0005778">
    <property type="term" value="C:peroxisomal membrane"/>
    <property type="evidence" value="ECO:0007669"/>
    <property type="project" value="UniProtKB-ARBA"/>
</dbReference>
<dbReference type="GO" id="GO:0007031">
    <property type="term" value="P:peroxisome organization"/>
    <property type="evidence" value="ECO:0007669"/>
    <property type="project" value="TreeGrafter"/>
</dbReference>
<dbReference type="InterPro" id="IPR052816">
    <property type="entry name" value="Peroxisomal_Membrane_PEX28-32"/>
</dbReference>
<dbReference type="InterPro" id="IPR010482">
    <property type="entry name" value="TECPR1-like_DysF"/>
</dbReference>
<dbReference type="PANTHER" id="PTHR28304">
    <property type="entry name" value="PEROXISOMAL MEMBRANE PROTEIN PEX29"/>
    <property type="match status" value="1"/>
</dbReference>
<dbReference type="PANTHER" id="PTHR28304:SF2">
    <property type="entry name" value="PEROXISOMAL MEMBRANE PROTEIN PEX29"/>
    <property type="match status" value="1"/>
</dbReference>
<dbReference type="Pfam" id="PF06398">
    <property type="entry name" value="Pex24p"/>
    <property type="match status" value="1"/>
</dbReference>
<evidence type="ECO:0000255" key="1"/>
<evidence type="ECO:0000255" key="2">
    <source>
        <dbReference type="PROSITE-ProRule" id="PRU00498"/>
    </source>
</evidence>
<evidence type="ECO:0000256" key="3">
    <source>
        <dbReference type="SAM" id="MobiDB-lite"/>
    </source>
</evidence>
<evidence type="ECO:0000269" key="4">
    <source>
    </source>
</evidence>
<evidence type="ECO:0000269" key="5">
    <source>
    </source>
</evidence>
<evidence type="ECO:0000303" key="6">
    <source>
    </source>
</evidence>
<evidence type="ECO:0000305" key="7"/>
<keyword id="KW-0256">Endoplasmic reticulum</keyword>
<keyword id="KW-0325">Glycoprotein</keyword>
<keyword id="KW-0472">Membrane</keyword>
<keyword id="KW-1185">Reference proteome</keyword>
<keyword id="KW-0812">Transmembrane</keyword>
<keyword id="KW-1133">Transmembrane helix</keyword>
<comment type="function">
    <text evidence="5">With PEX23, contributes to the formation of endoplasmic reticulum-mitochondria junctions which are important for mitochondrial function (PubMed:38682287). Involved in lipid dropplets formation (PubMed:38682287).</text>
</comment>
<comment type="subcellular location">
    <subcellularLocation>
        <location evidence="4">Endoplasmic reticulum membrane</location>
        <topology evidence="1">Multi-pass membrane protein</topology>
    </subcellularLocation>
    <text evidence="4">Localizes to multiple regions of the ER.</text>
</comment>
<comment type="disruption phenotype">
    <text evidence="4 5">Does not lead to any peroxisomal phenotype (PubMed:32665322). Reduces the number of lipid droplets and leads to fragmented and clustered mitochondria (PubMed:38682287). Also results in retarded growth and reduced mitochondrial activities (PubMed:38682287).</text>
</comment>
<comment type="similarity">
    <text evidence="7">Belongs to the PEX28-32 family. PEX29 subfamily.</text>
</comment>
<gene>
    <name evidence="6" type="primary">PEX29</name>
    <name type="ORF">HPODL_00080</name>
</gene>
<sequence length="535" mass="61407">MESMVNNLWSSWDTLSQATASTGGDMDAASVASKQSPQESKMAASSMIWSSFSEPQKTPPTKRASSSFFDDMFTSSKDHSTTLTDKMFERFLSMALPTTTTQDGEELQSILERIEMQKSRPQLSLNVMSKNAIQLLSRLSVPFVLIDQVIIIFSWSKPLYTLTFLNVATLLILKPILLLSLPFFYTCFEIIVPAYMKRHPPDKHTILQNRNPIPAEGPSVSHVDVPRPVPELSREFVLNSTDLQNHMLLYVMSYDFVTSLIVKYLYFKDENITIFIFVALLTSGTLLTLFGAQVLSAMLPFIKVTLSVGLWAATIAMHPNYRSTLLDMLYSEDTRLRLLMMSNRLELWLNKELNLREQKEVKETEIFELQHLDPETHNWQLICFSSDPYPANSHARLNNLPLLGTLHLSQVKPPEGWKFVDVETAVNTRSVDGWLLDLTPEGWIKENFLNETMDIDEDEKWCYDLVTKFSYQAGLTTNEKKTRGEVRRRRWIRYCVRDIWDEDDQMEETVAHRRNKSMESSNSLHPVKSIDSVDG</sequence>
<reference key="1">
    <citation type="journal article" date="2013" name="BMC Genomics">
        <title>Genome sequence and analysis of methylotrophic yeast Hansenula polymorpha DL1.</title>
        <authorList>
            <person name="Ravin N.V."/>
            <person name="Eldarov M.A."/>
            <person name="Kadnikov V.V."/>
            <person name="Beletsky A.V."/>
            <person name="Schneider J."/>
            <person name="Mardanova E.S."/>
            <person name="Smekalova E.M."/>
            <person name="Zvereva M.I."/>
            <person name="Dontsova O.A."/>
            <person name="Mardanov A.V."/>
            <person name="Skryabin K.G."/>
        </authorList>
    </citation>
    <scope>NUCLEOTIDE SEQUENCE [LARGE SCALE GENOMIC DNA]</scope>
    <source>
        <strain>ATCC 26012 / BCRC 20466 / JCM 22074 / NRRL Y-7560 / DL-1</strain>
    </source>
</reference>
<reference key="2">
    <citation type="journal article" date="2020" name="J. Cell Sci.">
        <title>Pex24 and Pex32 are required to tether peroxisomes to the ER for organelle biogenesis, positioning and segregation in yeast.</title>
        <authorList>
            <person name="Wu F."/>
            <person name="de Boer R."/>
            <person name="Krikken A.M."/>
            <person name="Aksit A."/>
            <person name="Bordin N."/>
            <person name="Devos D.P."/>
            <person name="van der Klei I.J."/>
        </authorList>
    </citation>
    <scope>DISRUPTION PHENOTYPE</scope>
    <scope>SUBCELLULAR LOCATION</scope>
</reference>
<reference key="3">
    <citation type="journal article" date="2024" name="Biol. Open">
        <title>Hansenula polymorpha cells lacking the ER-localized peroxins Pex23 or Pex29 show defects in mitochondrial function and morphology.</title>
        <authorList>
            <person name="Chen H."/>
            <person name="de Boer R."/>
            <person name="Krikken A.M."/>
            <person name="Wu F."/>
            <person name="van der Klei I."/>
        </authorList>
    </citation>
    <scope>FUNCTION</scope>
    <scope>DISRUPTION PHENOTYPE</scope>
</reference>
<proteinExistence type="inferred from homology"/>
<feature type="chain" id="PRO_0000461714" description="Peroxisomal membrane protein PEX29">
    <location>
        <begin position="1"/>
        <end position="535"/>
    </location>
</feature>
<feature type="transmembrane region" description="Helical" evidence="1">
    <location>
        <begin position="139"/>
        <end position="159"/>
    </location>
</feature>
<feature type="transmembrane region" description="Helical" evidence="1">
    <location>
        <begin position="176"/>
        <end position="196"/>
    </location>
</feature>
<feature type="transmembrane region" description="Helical" evidence="1">
    <location>
        <begin position="247"/>
        <end position="267"/>
    </location>
</feature>
<feature type="transmembrane region" description="Helical" evidence="1">
    <location>
        <begin position="272"/>
        <end position="292"/>
    </location>
</feature>
<feature type="transmembrane region" description="Helical" evidence="1">
    <location>
        <begin position="297"/>
        <end position="317"/>
    </location>
</feature>
<feature type="region of interest" description="Disordered" evidence="3">
    <location>
        <begin position="511"/>
        <end position="535"/>
    </location>
</feature>
<feature type="glycosylation site" description="N-linked (GlcNAc...) asparagine" evidence="2">
    <location>
        <position position="239"/>
    </location>
</feature>
<feature type="glycosylation site" description="N-linked (GlcNAc...) asparagine" evidence="2">
    <location>
        <position position="271"/>
    </location>
</feature>
<feature type="glycosylation site" description="N-linked (GlcNAc...) asparagine" evidence="2">
    <location>
        <position position="450"/>
    </location>
</feature>
<feature type="glycosylation site" description="N-linked (GlcNAc...) asparagine" evidence="2">
    <location>
        <position position="515"/>
    </location>
</feature>
<accession>W1QL91</accession>
<protein>
    <recommendedName>
        <fullName evidence="6">Peroxisomal membrane protein PEX29</fullName>
    </recommendedName>
    <alternativeName>
        <fullName evidence="7">Peroxin-29</fullName>
    </alternativeName>
</protein>